<comment type="function">
    <text evidence="1">Acts as a chaperone.</text>
</comment>
<comment type="induction">
    <text evidence="1">By stress conditions e.g. heat shock.</text>
</comment>
<comment type="similarity">
    <text evidence="1">Belongs to the heat shock protein 70 family.</text>
</comment>
<sequence>MAKEIVLGIDLGTTNSVVSIVEGKNPTVLENPNGKRTTPSVVAFKNGEIIVGDAAKRQVETNPDTIISIKRLMGTNKTVKANNKEYKPEEISAMILSYMKDYAEKKLGQKVSKAVITVPAYFDNAEREATKNAGRIAGLEVLRIINEPTAAALAFGLDKNKAMKVLVYDLGGGTFDVSVLDLEDGTFEVLSTSGDNHLGGDDWDNEIVKWLTKEIKTKYSYDVSKDKYALARLKENAEKAKIDLSNQSVVQINIPFLAMSANGPINVELSLKRSEFEAMTSHLLDRTRKPIEDALKEAKLSANDIHEVLLVGGSTRMPAVQDMVKRTLGKEPNRSINPDEVVSIGAAIQGGVLAGHIDDILLLDVTPLTLGIETLGGVATPLIPRNTTIPATKSQVFSTAADNQTEVTISVIQGERQMASDNKMLGRFNLTGIEAAPRGVPQIEVTFSIDVNGITKVSAKDMKTQKEQTITIENSSKLSEEEIQKFIKDAEANKEADAKRKEEAETIVRAESLIDQVKKALEAQGDKADAKTKEESDKLIKELQDLIDKKDIPTLKAKLEEVENMMKNFANFAQQANATKDQSSKDQEEVATVVEE</sequence>
<gene>
    <name evidence="1" type="primary">dnaK</name>
    <name type="ordered locus">MS53_0351</name>
</gene>
<proteinExistence type="inferred from homology"/>
<organism>
    <name type="scientific">Mycoplasmopsis synoviae (strain 53)</name>
    <name type="common">Mycoplasma synoviae</name>
    <dbReference type="NCBI Taxonomy" id="262723"/>
    <lineage>
        <taxon>Bacteria</taxon>
        <taxon>Bacillati</taxon>
        <taxon>Mycoplasmatota</taxon>
        <taxon>Mycoplasmoidales</taxon>
        <taxon>Metamycoplasmataceae</taxon>
        <taxon>Mycoplasmopsis</taxon>
    </lineage>
</organism>
<reference key="1">
    <citation type="journal article" date="2005" name="J. Bacteriol.">
        <title>Swine and poultry pathogens: the complete genome sequences of two strains of Mycoplasma hyopneumoniae and a strain of Mycoplasma synoviae.</title>
        <authorList>
            <person name="Vasconcelos A.T.R."/>
            <person name="Ferreira H.B."/>
            <person name="Bizarro C.V."/>
            <person name="Bonatto S.L."/>
            <person name="Carvalho M.O."/>
            <person name="Pinto P.M."/>
            <person name="Almeida D.F."/>
            <person name="Almeida L.G.P."/>
            <person name="Almeida R."/>
            <person name="Alves-Junior L."/>
            <person name="Assuncao E.N."/>
            <person name="Azevedo V.A.C."/>
            <person name="Bogo M.R."/>
            <person name="Brigido M.M."/>
            <person name="Brocchi M."/>
            <person name="Burity H.A."/>
            <person name="Camargo A.A."/>
            <person name="Camargo S.S."/>
            <person name="Carepo M.S."/>
            <person name="Carraro D.M."/>
            <person name="de Mattos Cascardo J.C."/>
            <person name="Castro L.A."/>
            <person name="Cavalcanti G."/>
            <person name="Chemale G."/>
            <person name="Collevatti R.G."/>
            <person name="Cunha C.W."/>
            <person name="Dallagiovanna B."/>
            <person name="Dambros B.P."/>
            <person name="Dellagostin O.A."/>
            <person name="Falcao C."/>
            <person name="Fantinatti-Garboggini F."/>
            <person name="Felipe M.S.S."/>
            <person name="Fiorentin L."/>
            <person name="Franco G.R."/>
            <person name="Freitas N.S.A."/>
            <person name="Frias D."/>
            <person name="Grangeiro T.B."/>
            <person name="Grisard E.C."/>
            <person name="Guimaraes C.T."/>
            <person name="Hungria M."/>
            <person name="Jardim S.N."/>
            <person name="Krieger M.A."/>
            <person name="Laurino J.P."/>
            <person name="Lima L.F.A."/>
            <person name="Lopes M.I."/>
            <person name="Loreto E.L.S."/>
            <person name="Madeira H.M.F."/>
            <person name="Manfio G.P."/>
            <person name="Maranhao A.Q."/>
            <person name="Martinkovics C.T."/>
            <person name="Medeiros S.R.B."/>
            <person name="Moreira M.A.M."/>
            <person name="Neiva M."/>
            <person name="Ramalho-Neto C.E."/>
            <person name="Nicolas M.F."/>
            <person name="Oliveira S.C."/>
            <person name="Paixao R.F.C."/>
            <person name="Pedrosa F.O."/>
            <person name="Pena S.D.J."/>
            <person name="Pereira M."/>
            <person name="Pereira-Ferrari L."/>
            <person name="Piffer I."/>
            <person name="Pinto L.S."/>
            <person name="Potrich D.P."/>
            <person name="Salim A.C.M."/>
            <person name="Santos F.R."/>
            <person name="Schmitt R."/>
            <person name="Schneider M.P.C."/>
            <person name="Schrank A."/>
            <person name="Schrank I.S."/>
            <person name="Schuck A.F."/>
            <person name="Seuanez H.N."/>
            <person name="Silva D.W."/>
            <person name="Silva R."/>
            <person name="Silva S.C."/>
            <person name="Soares C.M.A."/>
            <person name="Souza K.R.L."/>
            <person name="Souza R.C."/>
            <person name="Staats C.C."/>
            <person name="Steffens M.B.R."/>
            <person name="Teixeira S.M.R."/>
            <person name="Urmenyi T.P."/>
            <person name="Vainstein M.H."/>
            <person name="Zuccherato L.W."/>
            <person name="Simpson A.J.G."/>
            <person name="Zaha A."/>
        </authorList>
    </citation>
    <scope>NUCLEOTIDE SEQUENCE [LARGE SCALE GENOMIC DNA]</scope>
    <source>
        <strain>53</strain>
    </source>
</reference>
<protein>
    <recommendedName>
        <fullName evidence="1">Chaperone protein DnaK</fullName>
    </recommendedName>
    <alternativeName>
        <fullName evidence="1">HSP70</fullName>
    </alternativeName>
    <alternativeName>
        <fullName evidence="1">Heat shock 70 kDa protein</fullName>
    </alternativeName>
    <alternativeName>
        <fullName evidence="1">Heat shock protein 70</fullName>
    </alternativeName>
</protein>
<feature type="chain" id="PRO_0000225983" description="Chaperone protein DnaK">
    <location>
        <begin position="1"/>
        <end position="596"/>
    </location>
</feature>
<feature type="region of interest" description="Disordered" evidence="2">
    <location>
        <begin position="576"/>
        <end position="596"/>
    </location>
</feature>
<feature type="modified residue" description="Phosphothreonine; by autocatalysis" evidence="1">
    <location>
        <position position="174"/>
    </location>
</feature>
<name>DNAK_MYCS5</name>
<dbReference type="EMBL" id="AE017245">
    <property type="protein sequence ID" value="AAZ43763.1"/>
    <property type="molecule type" value="Genomic_DNA"/>
</dbReference>
<dbReference type="RefSeq" id="WP_011283494.1">
    <property type="nucleotide sequence ID" value="NC_007294.1"/>
</dbReference>
<dbReference type="SMR" id="Q4A658"/>
<dbReference type="STRING" id="262723.MS53_0351"/>
<dbReference type="KEGG" id="msy:MS53_0351"/>
<dbReference type="eggNOG" id="COG0443">
    <property type="taxonomic scope" value="Bacteria"/>
</dbReference>
<dbReference type="HOGENOM" id="CLU_005965_2_4_14"/>
<dbReference type="OrthoDB" id="9766019at2"/>
<dbReference type="Proteomes" id="UP000000549">
    <property type="component" value="Chromosome"/>
</dbReference>
<dbReference type="GO" id="GO:0005524">
    <property type="term" value="F:ATP binding"/>
    <property type="evidence" value="ECO:0007669"/>
    <property type="project" value="UniProtKB-UniRule"/>
</dbReference>
<dbReference type="GO" id="GO:0140662">
    <property type="term" value="F:ATP-dependent protein folding chaperone"/>
    <property type="evidence" value="ECO:0007669"/>
    <property type="project" value="InterPro"/>
</dbReference>
<dbReference type="GO" id="GO:0051082">
    <property type="term" value="F:unfolded protein binding"/>
    <property type="evidence" value="ECO:0007669"/>
    <property type="project" value="InterPro"/>
</dbReference>
<dbReference type="CDD" id="cd10234">
    <property type="entry name" value="ASKHA_NBD_HSP70_DnaK-like"/>
    <property type="match status" value="1"/>
</dbReference>
<dbReference type="FunFam" id="2.60.34.10:FF:000014">
    <property type="entry name" value="Chaperone protein DnaK HSP70"/>
    <property type="match status" value="1"/>
</dbReference>
<dbReference type="FunFam" id="3.30.420.40:FF:000071">
    <property type="entry name" value="Molecular chaperone DnaK"/>
    <property type="match status" value="1"/>
</dbReference>
<dbReference type="FunFam" id="3.90.640.10:FF:000003">
    <property type="entry name" value="Molecular chaperone DnaK"/>
    <property type="match status" value="1"/>
</dbReference>
<dbReference type="Gene3D" id="1.20.1270.10">
    <property type="match status" value="1"/>
</dbReference>
<dbReference type="Gene3D" id="3.30.420.40">
    <property type="match status" value="2"/>
</dbReference>
<dbReference type="Gene3D" id="3.90.640.10">
    <property type="entry name" value="Actin, Chain A, domain 4"/>
    <property type="match status" value="1"/>
</dbReference>
<dbReference type="Gene3D" id="2.60.34.10">
    <property type="entry name" value="Substrate Binding Domain Of DNAk, Chain A, domain 1"/>
    <property type="match status" value="1"/>
</dbReference>
<dbReference type="HAMAP" id="MF_00332">
    <property type="entry name" value="DnaK"/>
    <property type="match status" value="1"/>
</dbReference>
<dbReference type="InterPro" id="IPR043129">
    <property type="entry name" value="ATPase_NBD"/>
</dbReference>
<dbReference type="InterPro" id="IPR012725">
    <property type="entry name" value="Chaperone_DnaK"/>
</dbReference>
<dbReference type="InterPro" id="IPR018181">
    <property type="entry name" value="Heat_shock_70_CS"/>
</dbReference>
<dbReference type="InterPro" id="IPR029048">
    <property type="entry name" value="HSP70_C_sf"/>
</dbReference>
<dbReference type="InterPro" id="IPR029047">
    <property type="entry name" value="HSP70_peptide-bd_sf"/>
</dbReference>
<dbReference type="InterPro" id="IPR013126">
    <property type="entry name" value="Hsp_70_fam"/>
</dbReference>
<dbReference type="NCBIfam" id="NF001413">
    <property type="entry name" value="PRK00290.1"/>
    <property type="match status" value="1"/>
</dbReference>
<dbReference type="NCBIfam" id="TIGR02350">
    <property type="entry name" value="prok_dnaK"/>
    <property type="match status" value="1"/>
</dbReference>
<dbReference type="PANTHER" id="PTHR19375">
    <property type="entry name" value="HEAT SHOCK PROTEIN 70KDA"/>
    <property type="match status" value="1"/>
</dbReference>
<dbReference type="Pfam" id="PF00012">
    <property type="entry name" value="HSP70"/>
    <property type="match status" value="1"/>
</dbReference>
<dbReference type="PRINTS" id="PR00301">
    <property type="entry name" value="HEATSHOCK70"/>
</dbReference>
<dbReference type="SUPFAM" id="SSF53067">
    <property type="entry name" value="Actin-like ATPase domain"/>
    <property type="match status" value="2"/>
</dbReference>
<dbReference type="SUPFAM" id="SSF100934">
    <property type="entry name" value="Heat shock protein 70kD (HSP70), C-terminal subdomain"/>
    <property type="match status" value="1"/>
</dbReference>
<dbReference type="SUPFAM" id="SSF100920">
    <property type="entry name" value="Heat shock protein 70kD (HSP70), peptide-binding domain"/>
    <property type="match status" value="1"/>
</dbReference>
<dbReference type="PROSITE" id="PS00297">
    <property type="entry name" value="HSP70_1"/>
    <property type="match status" value="1"/>
</dbReference>
<dbReference type="PROSITE" id="PS00329">
    <property type="entry name" value="HSP70_2"/>
    <property type="match status" value="1"/>
</dbReference>
<dbReference type="PROSITE" id="PS01036">
    <property type="entry name" value="HSP70_3"/>
    <property type="match status" value="1"/>
</dbReference>
<keyword id="KW-0067">ATP-binding</keyword>
<keyword id="KW-0143">Chaperone</keyword>
<keyword id="KW-0547">Nucleotide-binding</keyword>
<keyword id="KW-0597">Phosphoprotein</keyword>
<keyword id="KW-1185">Reference proteome</keyword>
<keyword id="KW-0346">Stress response</keyword>
<accession>Q4A658</accession>
<evidence type="ECO:0000255" key="1">
    <source>
        <dbReference type="HAMAP-Rule" id="MF_00332"/>
    </source>
</evidence>
<evidence type="ECO:0000256" key="2">
    <source>
        <dbReference type="SAM" id="MobiDB-lite"/>
    </source>
</evidence>